<sequence>MTPAHKVLLCILDGWGIRQERDNNAIVLAGTPHLDKLASPYPFTELQTAGLAVGLPEGQMGNSEVGHTNIGAGRIVYQDLVRINRAAESGELAQNPVLRAALDGVKADGKALHLLGLVSPGGVHSSMDHLFALLKAAKERNVAHVYVHAFLDGRDTPPQSALGYVEELERFLHETHTGRIATVTGRFYAMDRDKRWDRVHQAYEALVFGRGPKAPDALSAIRASYAEKVTDEFVKPTVLAAGDGTPVGRIQDGDAVIFFNFRADRARELTQALAFPEFKEFDRGGLRLGRYVCMTQYDETFKLPALFEPDQPQDIFPELLSRQGLRQFRTAETEKYAHVTFFFNGGREVVYAGEDRHLVPSPRDVKTYDLKPEMSAYEVTAELVKRLDSGKYDFALVNFANPDMVGHSGRLDAAMKAVKAVDECLGALGKACERNGWVLAISADHGNCEQMVDLETGEPHTAHTLNPVPFHLIHPDFRGQKLRPGILADIAPTLCKVMGLPQSKEMNRQGLLP</sequence>
<gene>
    <name evidence="1" type="primary">gpmI</name>
    <name type="ordered locus">MXAN_1236</name>
</gene>
<feature type="chain" id="PRO_1000135904" description="2,3-bisphosphoglycerate-independent phosphoglycerate mutase">
    <location>
        <begin position="1"/>
        <end position="513"/>
    </location>
</feature>
<feature type="active site" description="Phosphoserine intermediate" evidence="1">
    <location>
        <position position="63"/>
    </location>
</feature>
<feature type="binding site" evidence="1">
    <location>
        <position position="13"/>
    </location>
    <ligand>
        <name>Mn(2+)</name>
        <dbReference type="ChEBI" id="CHEBI:29035"/>
        <label>2</label>
    </ligand>
</feature>
<feature type="binding site" evidence="1">
    <location>
        <position position="63"/>
    </location>
    <ligand>
        <name>Mn(2+)</name>
        <dbReference type="ChEBI" id="CHEBI:29035"/>
        <label>2</label>
    </ligand>
</feature>
<feature type="binding site" evidence="1">
    <location>
        <position position="124"/>
    </location>
    <ligand>
        <name>substrate</name>
    </ligand>
</feature>
<feature type="binding site" evidence="1">
    <location>
        <begin position="154"/>
        <end position="155"/>
    </location>
    <ligand>
        <name>substrate</name>
    </ligand>
</feature>
<feature type="binding site" evidence="1">
    <location>
        <position position="186"/>
    </location>
    <ligand>
        <name>substrate</name>
    </ligand>
</feature>
<feature type="binding site" evidence="1">
    <location>
        <position position="192"/>
    </location>
    <ligand>
        <name>substrate</name>
    </ligand>
</feature>
<feature type="binding site" evidence="1">
    <location>
        <begin position="262"/>
        <end position="265"/>
    </location>
    <ligand>
        <name>substrate</name>
    </ligand>
</feature>
<feature type="binding site" evidence="1">
    <location>
        <position position="335"/>
    </location>
    <ligand>
        <name>substrate</name>
    </ligand>
</feature>
<feature type="binding site" evidence="1">
    <location>
        <position position="403"/>
    </location>
    <ligand>
        <name>Mn(2+)</name>
        <dbReference type="ChEBI" id="CHEBI:29035"/>
        <label>1</label>
    </ligand>
</feature>
<feature type="binding site" evidence="1">
    <location>
        <position position="407"/>
    </location>
    <ligand>
        <name>Mn(2+)</name>
        <dbReference type="ChEBI" id="CHEBI:29035"/>
        <label>1</label>
    </ligand>
</feature>
<feature type="binding site" evidence="1">
    <location>
        <position position="444"/>
    </location>
    <ligand>
        <name>Mn(2+)</name>
        <dbReference type="ChEBI" id="CHEBI:29035"/>
        <label>2</label>
    </ligand>
</feature>
<feature type="binding site" evidence="1">
    <location>
        <position position="445"/>
    </location>
    <ligand>
        <name>Mn(2+)</name>
        <dbReference type="ChEBI" id="CHEBI:29035"/>
        <label>2</label>
    </ligand>
</feature>
<feature type="binding site" evidence="1">
    <location>
        <position position="463"/>
    </location>
    <ligand>
        <name>Mn(2+)</name>
        <dbReference type="ChEBI" id="CHEBI:29035"/>
        <label>1</label>
    </ligand>
</feature>
<keyword id="KW-0324">Glycolysis</keyword>
<keyword id="KW-0413">Isomerase</keyword>
<keyword id="KW-0464">Manganese</keyword>
<keyword id="KW-0479">Metal-binding</keyword>
<keyword id="KW-1185">Reference proteome</keyword>
<evidence type="ECO:0000255" key="1">
    <source>
        <dbReference type="HAMAP-Rule" id="MF_01038"/>
    </source>
</evidence>
<accession>Q1DCX8</accession>
<comment type="function">
    <text evidence="1">Catalyzes the interconversion of 2-phosphoglycerate and 3-phosphoglycerate.</text>
</comment>
<comment type="catalytic activity">
    <reaction evidence="1">
        <text>(2R)-2-phosphoglycerate = (2R)-3-phosphoglycerate</text>
        <dbReference type="Rhea" id="RHEA:15901"/>
        <dbReference type="ChEBI" id="CHEBI:58272"/>
        <dbReference type="ChEBI" id="CHEBI:58289"/>
        <dbReference type="EC" id="5.4.2.12"/>
    </reaction>
</comment>
<comment type="cofactor">
    <cofactor evidence="1">
        <name>Mn(2+)</name>
        <dbReference type="ChEBI" id="CHEBI:29035"/>
    </cofactor>
    <text evidence="1">Binds 2 manganese ions per subunit.</text>
</comment>
<comment type="pathway">
    <text evidence="1">Carbohydrate degradation; glycolysis; pyruvate from D-glyceraldehyde 3-phosphate: step 3/5.</text>
</comment>
<comment type="subunit">
    <text evidence="1">Monomer.</text>
</comment>
<comment type="similarity">
    <text evidence="1">Belongs to the BPG-independent phosphoglycerate mutase family.</text>
</comment>
<name>GPMI_MYXXD</name>
<organism>
    <name type="scientific">Myxococcus xanthus (strain DK1622)</name>
    <dbReference type="NCBI Taxonomy" id="246197"/>
    <lineage>
        <taxon>Bacteria</taxon>
        <taxon>Pseudomonadati</taxon>
        <taxon>Myxococcota</taxon>
        <taxon>Myxococcia</taxon>
        <taxon>Myxococcales</taxon>
        <taxon>Cystobacterineae</taxon>
        <taxon>Myxococcaceae</taxon>
        <taxon>Myxococcus</taxon>
    </lineage>
</organism>
<dbReference type="EC" id="5.4.2.12" evidence="1"/>
<dbReference type="EMBL" id="CP000113">
    <property type="protein sequence ID" value="ABF86346.1"/>
    <property type="molecule type" value="Genomic_DNA"/>
</dbReference>
<dbReference type="RefSeq" id="WP_011551355.1">
    <property type="nucleotide sequence ID" value="NC_008095.1"/>
</dbReference>
<dbReference type="SMR" id="Q1DCX8"/>
<dbReference type="STRING" id="246197.MXAN_1236"/>
<dbReference type="EnsemblBacteria" id="ABF86346">
    <property type="protein sequence ID" value="ABF86346"/>
    <property type="gene ID" value="MXAN_1236"/>
</dbReference>
<dbReference type="GeneID" id="41358685"/>
<dbReference type="KEGG" id="mxa:MXAN_1236"/>
<dbReference type="eggNOG" id="COG0696">
    <property type="taxonomic scope" value="Bacteria"/>
</dbReference>
<dbReference type="HOGENOM" id="CLU_026099_2_0_7"/>
<dbReference type="OrthoDB" id="9800863at2"/>
<dbReference type="UniPathway" id="UPA00109">
    <property type="reaction ID" value="UER00186"/>
</dbReference>
<dbReference type="Proteomes" id="UP000002402">
    <property type="component" value="Chromosome"/>
</dbReference>
<dbReference type="GO" id="GO:0005737">
    <property type="term" value="C:cytoplasm"/>
    <property type="evidence" value="ECO:0007669"/>
    <property type="project" value="InterPro"/>
</dbReference>
<dbReference type="GO" id="GO:0030145">
    <property type="term" value="F:manganese ion binding"/>
    <property type="evidence" value="ECO:0007669"/>
    <property type="project" value="UniProtKB-UniRule"/>
</dbReference>
<dbReference type="GO" id="GO:0004619">
    <property type="term" value="F:phosphoglycerate mutase activity"/>
    <property type="evidence" value="ECO:0007669"/>
    <property type="project" value="UniProtKB-EC"/>
</dbReference>
<dbReference type="GO" id="GO:0006007">
    <property type="term" value="P:glucose catabolic process"/>
    <property type="evidence" value="ECO:0007669"/>
    <property type="project" value="InterPro"/>
</dbReference>
<dbReference type="GO" id="GO:0006096">
    <property type="term" value="P:glycolytic process"/>
    <property type="evidence" value="ECO:0007669"/>
    <property type="project" value="UniProtKB-UniRule"/>
</dbReference>
<dbReference type="CDD" id="cd16010">
    <property type="entry name" value="iPGM"/>
    <property type="match status" value="1"/>
</dbReference>
<dbReference type="FunFam" id="3.40.1450.10:FF:000001">
    <property type="entry name" value="2,3-bisphosphoglycerate-independent phosphoglycerate mutase"/>
    <property type="match status" value="1"/>
</dbReference>
<dbReference type="Gene3D" id="3.40.720.10">
    <property type="entry name" value="Alkaline Phosphatase, subunit A"/>
    <property type="match status" value="1"/>
</dbReference>
<dbReference type="Gene3D" id="3.40.1450.10">
    <property type="entry name" value="BPG-independent phosphoglycerate mutase, domain B"/>
    <property type="match status" value="1"/>
</dbReference>
<dbReference type="HAMAP" id="MF_01038">
    <property type="entry name" value="GpmI"/>
    <property type="match status" value="1"/>
</dbReference>
<dbReference type="InterPro" id="IPR017850">
    <property type="entry name" value="Alkaline_phosphatase_core_sf"/>
</dbReference>
<dbReference type="InterPro" id="IPR011258">
    <property type="entry name" value="BPG-indep_PGM_N"/>
</dbReference>
<dbReference type="InterPro" id="IPR006124">
    <property type="entry name" value="Metalloenzyme"/>
</dbReference>
<dbReference type="InterPro" id="IPR036646">
    <property type="entry name" value="PGAM_B_sf"/>
</dbReference>
<dbReference type="InterPro" id="IPR005995">
    <property type="entry name" value="Pgm_bpd_ind"/>
</dbReference>
<dbReference type="NCBIfam" id="TIGR01307">
    <property type="entry name" value="pgm_bpd_ind"/>
    <property type="match status" value="1"/>
</dbReference>
<dbReference type="PANTHER" id="PTHR31637">
    <property type="entry name" value="2,3-BISPHOSPHOGLYCERATE-INDEPENDENT PHOSPHOGLYCERATE MUTASE"/>
    <property type="match status" value="1"/>
</dbReference>
<dbReference type="PANTHER" id="PTHR31637:SF0">
    <property type="entry name" value="2,3-BISPHOSPHOGLYCERATE-INDEPENDENT PHOSPHOGLYCERATE MUTASE"/>
    <property type="match status" value="1"/>
</dbReference>
<dbReference type="Pfam" id="PF06415">
    <property type="entry name" value="iPGM_N"/>
    <property type="match status" value="1"/>
</dbReference>
<dbReference type="Pfam" id="PF01676">
    <property type="entry name" value="Metalloenzyme"/>
    <property type="match status" value="1"/>
</dbReference>
<dbReference type="PIRSF" id="PIRSF001492">
    <property type="entry name" value="IPGAM"/>
    <property type="match status" value="1"/>
</dbReference>
<dbReference type="SUPFAM" id="SSF64158">
    <property type="entry name" value="2,3-Bisphosphoglycerate-independent phosphoglycerate mutase, substrate-binding domain"/>
    <property type="match status" value="1"/>
</dbReference>
<dbReference type="SUPFAM" id="SSF53649">
    <property type="entry name" value="Alkaline phosphatase-like"/>
    <property type="match status" value="1"/>
</dbReference>
<protein>
    <recommendedName>
        <fullName evidence="1">2,3-bisphosphoglycerate-independent phosphoglycerate mutase</fullName>
        <shortName evidence="1">BPG-independent PGAM</shortName>
        <shortName evidence="1">Phosphoglyceromutase</shortName>
        <shortName evidence="1">iPGM</shortName>
        <ecNumber evidence="1">5.4.2.12</ecNumber>
    </recommendedName>
</protein>
<proteinExistence type="inferred from homology"/>
<reference key="1">
    <citation type="journal article" date="2006" name="Proc. Natl. Acad. Sci. U.S.A.">
        <title>Evolution of sensory complexity recorded in a myxobacterial genome.</title>
        <authorList>
            <person name="Goldman B.S."/>
            <person name="Nierman W.C."/>
            <person name="Kaiser D."/>
            <person name="Slater S.C."/>
            <person name="Durkin A.S."/>
            <person name="Eisen J.A."/>
            <person name="Ronning C.M."/>
            <person name="Barbazuk W.B."/>
            <person name="Blanchard M."/>
            <person name="Field C."/>
            <person name="Halling C."/>
            <person name="Hinkle G."/>
            <person name="Iartchuk O."/>
            <person name="Kim H.S."/>
            <person name="Mackenzie C."/>
            <person name="Madupu R."/>
            <person name="Miller N."/>
            <person name="Shvartsbeyn A."/>
            <person name="Sullivan S.A."/>
            <person name="Vaudin M."/>
            <person name="Wiegand R."/>
            <person name="Kaplan H.B."/>
        </authorList>
    </citation>
    <scope>NUCLEOTIDE SEQUENCE [LARGE SCALE GENOMIC DNA]</scope>
    <source>
        <strain>DK1622</strain>
    </source>
</reference>